<protein>
    <recommendedName>
        <fullName evidence="1">Thymidylate kinase</fullName>
        <ecNumber evidence="1">2.7.4.9</ecNumber>
    </recommendedName>
    <alternativeName>
        <fullName evidence="1">dTMP kinase</fullName>
    </alternativeName>
</protein>
<feature type="chain" id="PRO_0000155274" description="Thymidylate kinase">
    <location>
        <begin position="1"/>
        <end position="212"/>
    </location>
</feature>
<feature type="binding site" evidence="1">
    <location>
        <begin position="10"/>
        <end position="17"/>
    </location>
    <ligand>
        <name>ATP</name>
        <dbReference type="ChEBI" id="CHEBI:30616"/>
    </ligand>
</feature>
<organism>
    <name type="scientific">Enterococcus faecalis (strain ATCC 700802 / V583)</name>
    <dbReference type="NCBI Taxonomy" id="226185"/>
    <lineage>
        <taxon>Bacteria</taxon>
        <taxon>Bacillati</taxon>
        <taxon>Bacillota</taxon>
        <taxon>Bacilli</taxon>
        <taxon>Lactobacillales</taxon>
        <taxon>Enterococcaceae</taxon>
        <taxon>Enterococcus</taxon>
    </lineage>
</organism>
<sequence length="212" mass="24004">MQGIFITFEGPDGAGKTSVLKEVSERLAKESKRKIVTTREPGGIPIAEKIRTVILDPRNDRMDERTEALLYAAARRQHLVEKILPALEAGHLVLCDRFVDSSLAYQGAGRRIGIAPIASINAFATEGVSPDFTIYLDVDSDTGLRRIQENRTQQIDRLDSEGLEFHQRVRHEYLKLAEENPQRIKKIDARMSLELVVEATYQAIIERYPENF</sequence>
<accession>Q830L6</accession>
<name>KTHY_ENTFA</name>
<dbReference type="EC" id="2.7.4.9" evidence="1"/>
<dbReference type="EMBL" id="AE016830">
    <property type="protein sequence ID" value="AAO82462.1"/>
    <property type="molecule type" value="Genomic_DNA"/>
</dbReference>
<dbReference type="RefSeq" id="NP_816392.1">
    <property type="nucleotide sequence ID" value="NC_004668.1"/>
</dbReference>
<dbReference type="RefSeq" id="WP_002356366.1">
    <property type="nucleotide sequence ID" value="NZ_KE136528.1"/>
</dbReference>
<dbReference type="SMR" id="Q830L6"/>
<dbReference type="STRING" id="226185.EF_2764"/>
<dbReference type="EnsemblBacteria" id="AAO82462">
    <property type="protein sequence ID" value="AAO82462"/>
    <property type="gene ID" value="EF_2764"/>
</dbReference>
<dbReference type="GeneID" id="60894748"/>
<dbReference type="KEGG" id="efa:EF2764"/>
<dbReference type="PATRIC" id="fig|226185.45.peg.805"/>
<dbReference type="eggNOG" id="COG0125">
    <property type="taxonomic scope" value="Bacteria"/>
</dbReference>
<dbReference type="HOGENOM" id="CLU_049131_0_2_9"/>
<dbReference type="Proteomes" id="UP000001415">
    <property type="component" value="Chromosome"/>
</dbReference>
<dbReference type="GO" id="GO:0005829">
    <property type="term" value="C:cytosol"/>
    <property type="evidence" value="ECO:0007669"/>
    <property type="project" value="TreeGrafter"/>
</dbReference>
<dbReference type="GO" id="GO:0005524">
    <property type="term" value="F:ATP binding"/>
    <property type="evidence" value="ECO:0007669"/>
    <property type="project" value="UniProtKB-UniRule"/>
</dbReference>
<dbReference type="GO" id="GO:0004798">
    <property type="term" value="F:dTMP kinase activity"/>
    <property type="evidence" value="ECO:0007669"/>
    <property type="project" value="UniProtKB-UniRule"/>
</dbReference>
<dbReference type="GO" id="GO:0006233">
    <property type="term" value="P:dTDP biosynthetic process"/>
    <property type="evidence" value="ECO:0007669"/>
    <property type="project" value="InterPro"/>
</dbReference>
<dbReference type="GO" id="GO:0006235">
    <property type="term" value="P:dTTP biosynthetic process"/>
    <property type="evidence" value="ECO:0007669"/>
    <property type="project" value="UniProtKB-UniRule"/>
</dbReference>
<dbReference type="GO" id="GO:0006227">
    <property type="term" value="P:dUDP biosynthetic process"/>
    <property type="evidence" value="ECO:0007669"/>
    <property type="project" value="TreeGrafter"/>
</dbReference>
<dbReference type="CDD" id="cd01672">
    <property type="entry name" value="TMPK"/>
    <property type="match status" value="1"/>
</dbReference>
<dbReference type="FunFam" id="3.40.50.300:FF:000225">
    <property type="entry name" value="Thymidylate kinase"/>
    <property type="match status" value="1"/>
</dbReference>
<dbReference type="Gene3D" id="3.40.50.300">
    <property type="entry name" value="P-loop containing nucleotide triphosphate hydrolases"/>
    <property type="match status" value="1"/>
</dbReference>
<dbReference type="HAMAP" id="MF_00165">
    <property type="entry name" value="Thymidylate_kinase"/>
    <property type="match status" value="1"/>
</dbReference>
<dbReference type="InterPro" id="IPR027417">
    <property type="entry name" value="P-loop_NTPase"/>
</dbReference>
<dbReference type="InterPro" id="IPR039430">
    <property type="entry name" value="Thymidylate_kin-like_dom"/>
</dbReference>
<dbReference type="InterPro" id="IPR018095">
    <property type="entry name" value="Thymidylate_kin_CS"/>
</dbReference>
<dbReference type="InterPro" id="IPR018094">
    <property type="entry name" value="Thymidylate_kinase"/>
</dbReference>
<dbReference type="NCBIfam" id="TIGR00041">
    <property type="entry name" value="DTMP_kinase"/>
    <property type="match status" value="1"/>
</dbReference>
<dbReference type="PANTHER" id="PTHR10344">
    <property type="entry name" value="THYMIDYLATE KINASE"/>
    <property type="match status" value="1"/>
</dbReference>
<dbReference type="PANTHER" id="PTHR10344:SF4">
    <property type="entry name" value="UMP-CMP KINASE 2, MITOCHONDRIAL"/>
    <property type="match status" value="1"/>
</dbReference>
<dbReference type="Pfam" id="PF02223">
    <property type="entry name" value="Thymidylate_kin"/>
    <property type="match status" value="1"/>
</dbReference>
<dbReference type="SUPFAM" id="SSF52540">
    <property type="entry name" value="P-loop containing nucleoside triphosphate hydrolases"/>
    <property type="match status" value="1"/>
</dbReference>
<dbReference type="PROSITE" id="PS01331">
    <property type="entry name" value="THYMIDYLATE_KINASE"/>
    <property type="match status" value="1"/>
</dbReference>
<comment type="function">
    <text evidence="1">Phosphorylation of dTMP to form dTDP in both de novo and salvage pathways of dTTP synthesis.</text>
</comment>
<comment type="catalytic activity">
    <reaction evidence="1">
        <text>dTMP + ATP = dTDP + ADP</text>
        <dbReference type="Rhea" id="RHEA:13517"/>
        <dbReference type="ChEBI" id="CHEBI:30616"/>
        <dbReference type="ChEBI" id="CHEBI:58369"/>
        <dbReference type="ChEBI" id="CHEBI:63528"/>
        <dbReference type="ChEBI" id="CHEBI:456216"/>
        <dbReference type="EC" id="2.7.4.9"/>
    </reaction>
</comment>
<comment type="similarity">
    <text evidence="1">Belongs to the thymidylate kinase family.</text>
</comment>
<evidence type="ECO:0000255" key="1">
    <source>
        <dbReference type="HAMAP-Rule" id="MF_00165"/>
    </source>
</evidence>
<proteinExistence type="inferred from homology"/>
<reference key="1">
    <citation type="journal article" date="2003" name="Science">
        <title>Role of mobile DNA in the evolution of vancomycin-resistant Enterococcus faecalis.</title>
        <authorList>
            <person name="Paulsen I.T."/>
            <person name="Banerjei L."/>
            <person name="Myers G.S.A."/>
            <person name="Nelson K.E."/>
            <person name="Seshadri R."/>
            <person name="Read T.D."/>
            <person name="Fouts D.E."/>
            <person name="Eisen J.A."/>
            <person name="Gill S.R."/>
            <person name="Heidelberg J.F."/>
            <person name="Tettelin H."/>
            <person name="Dodson R.J."/>
            <person name="Umayam L.A."/>
            <person name="Brinkac L.M."/>
            <person name="Beanan M.J."/>
            <person name="Daugherty S.C."/>
            <person name="DeBoy R.T."/>
            <person name="Durkin S.A."/>
            <person name="Kolonay J.F."/>
            <person name="Madupu R."/>
            <person name="Nelson W.C."/>
            <person name="Vamathevan J.J."/>
            <person name="Tran B."/>
            <person name="Upton J."/>
            <person name="Hansen T."/>
            <person name="Shetty J."/>
            <person name="Khouri H.M."/>
            <person name="Utterback T.R."/>
            <person name="Radune D."/>
            <person name="Ketchum K.A."/>
            <person name="Dougherty B.A."/>
            <person name="Fraser C.M."/>
        </authorList>
    </citation>
    <scope>NUCLEOTIDE SEQUENCE [LARGE SCALE GENOMIC DNA]</scope>
    <source>
        <strain>ATCC 700802 / V583</strain>
    </source>
</reference>
<gene>
    <name evidence="1" type="primary">tmk</name>
    <name type="ordered locus">EF_2764</name>
</gene>
<keyword id="KW-0067">ATP-binding</keyword>
<keyword id="KW-0418">Kinase</keyword>
<keyword id="KW-0545">Nucleotide biosynthesis</keyword>
<keyword id="KW-0547">Nucleotide-binding</keyword>
<keyword id="KW-1185">Reference proteome</keyword>
<keyword id="KW-0808">Transferase</keyword>